<gene>
    <name evidence="9" type="primary">pksAC</name>
    <name evidence="9" type="ORF">orf5</name>
</gene>
<proteinExistence type="inferred from homology"/>
<reference key="1">
    <citation type="journal article" date="2019" name="MSphere">
        <title>Identification of a polyketide synthase gene responsible for ascochitine biosynthesis in Ascochyta fabae and its abrogation in sister taxa.</title>
        <authorList>
            <person name="Kim W."/>
            <person name="Lichtenzveig J."/>
            <person name="Syme R.A."/>
            <person name="Williams A.H."/>
            <person name="Peever T.L."/>
            <person name="Chen W."/>
        </authorList>
    </citation>
    <scope>NUCLEOTIDE SEQUENCE [GENOMIC DNA]</scope>
    <scope>FUNCTION</scope>
    <scope>DOMAIN</scope>
    <scope>DISRUPTION PHENOTYPE</scope>
    <scope>PATHWAY</scope>
    <source>
        <strain>AF247/15</strain>
    </source>
</reference>
<keyword id="KW-0012">Acyltransferase</keyword>
<keyword id="KW-0489">Methyltransferase</keyword>
<keyword id="KW-0511">Multifunctional enzyme</keyword>
<keyword id="KW-0521">NADP</keyword>
<keyword id="KW-0596">Phosphopantetheine</keyword>
<keyword id="KW-0597">Phosphoprotein</keyword>
<keyword id="KW-0808">Transferase</keyword>
<keyword id="KW-0843">Virulence</keyword>
<protein>
    <recommendedName>
        <fullName evidence="9">Non-reducing polyketide synthase AC</fullName>
        <shortName evidence="9">pksAC</shortName>
        <ecNumber evidence="8">2.3.1.-</ecNumber>
    </recommendedName>
    <alternativeName>
        <fullName evidence="9">Ascochitine biosynthesis cluster protein 5</fullName>
    </alternativeName>
</protein>
<sequence>MPHRLPSHGASLGLIFGPQAMNFDSNTFTTLRAKLVKDRHSQWAIDAIAALPAEWSAVSGNVAIFKQYDAGKALQNLNEWLKTGHVPPADIPFCNVLLAPMVVIDHVISYLEFLQSAFPDLDDDEELPASAKESLETLGLSLGTLSAFAVSSSSTLSEVKKHGATAIRLAMLVGAVGDAEDLAREPEEGALSFSAFWKSTELHDLLHTSLDAIPEAYISVAVDEKRSTITTSRSKASSHMQDLRSSGLYIAEVSIRGRFHWDGHESTLQELIQYCDRNLQFQFPDTSRIVLPSHSVTGGEYITQEDGSLHAIALRAILVDLSQWLETITGAYGSESSKGIKSVVCFGPERCVPSALVRRLGSKLTHVLDVDLPTSALPKQLLQSADVSSTNGVKIPASIKGQSPARQHPIDIDANDDKIAVIGMACNVPGGEDMDEFWKILVAGKSQHEELPRGTGRFEFETPWREPYTKTKWYGNFIKDYDVFDHKFFKKGPREMLNTEPQHRLLLHAAYQTLEQSGYFSKPDYDKHIACFLGPGHVDYASSVNCYAPNAYTATGNLKSMCAGKISHHFGWTGPILTLDTACSSSCVAIHYACRSILSGEVSAALAGGSNVLSSVEWYENLSGAQFLSPTGQCKPFDAKADGYCRGDGIGLVFLKKLSTALADGDQVYGVIAGSKVYQNVGSTTITVPNADSLATLFKDITKQARIDPAKVSVVEAHGTGTPVGDPAEYEAICRIFGGSQRTDVLSLSSVKGLFGHTEGASGVCSLLKVLLMMHENAIPPQASFGSMNPGLKATTQDNIEVPTRLTPWKPNTQIALINNYGASGSNSSLVVTEPPAFETFDHEALQYRAFPFWIPGLDDKSIQRYATRLRAWFQRHHSSSKDLSMRNMSFQLAFQSNRTLPQALVFKAASVSDLESKLKAFENGTLNSISSAATSQRPVILCFGGQISTYIGLDREVYENVAVLRQFLDQCDETSVSLGFPSVFPHIFQKEPIYDLIKLQLALFAMQYSCAQAWIACGVEVAAVVGHSFGELTASCVSGTVSLQDAITMIAGRARLIQKKWGTDSGAMIAVDTELSGVNDLLAKTREGSGADDNPSIACYNGHRSFTLAGTTKSIEQAESILKQDATFSSTRWKRLNVTNAFHSVLVDSLHHDLQSLGKRIVFNEPKLHFERSTKERMSGKPNSDYIAHHMRNPVYFDHAVQRLAKDFPAAIWLEAGSNSTITSMANRALSSSAASSTSSFHAVSITTDKSFDLLVDSTLKLWKEQLNVSFWAHHRSQTHQYTPMILPPYQFEKSRHWLETKPPPKPEPIPVEKSTTQAVETSKGFTSFAGYIDGNQRSLRYRINSNHETFQRHVNGHICAKLAAVWPSSIQIDMVLDALMNLRAEFKDLSYQPQISNIVHHRPLLLDNSKDYWLELVAKDDKGLTWDWNFSSSSGLGSKSTICTSGVCSFCSATDPNRLAEFQTLERLSSRRRCVELLEARDVENIMQGTANIYRAFSEVIEYTDDYRYVKKLVGHNNESAARVVKKHYGKTWLDYLLFDGLGQTAGMYVNLMADKANVSEKGIFMCETINRWLRSPTIRSHESLPTDWEVYAVHHPISDKKYVSDIFSFDARDGSLVEVVLGASYNKVPLPVMRGILGSQSSTTRLDAITANAEIPSQAGIGSQQPHLNFKPLSALPALSNGTTGTENPQIKSKTNKVKKVPTRKSGGSDLETPAKTRNILENLTGVEASSINDDSNLIDLGLDSLLSMELIRDVEDIFKVDLDAEQMLDLTDFASLVKYIREIRGVLEEQNVDDSESESEELQQQATPIDSATRQNHEKLTMNGTGLLTNGESVPEVPLDSTLVLDAFRYIKEASDDFIVKNKFETYCAEFMPRSEEVSIAIFCNAFEELGCPIRTATAGTRLERVQHLPKHKKVVDYIYKALEKNAGLIEISGEEIIRTSVPCPSEQTEAMLESLLHDRPAQDAEIQLMRITGAAFGKCLAGKADVLPLLFGSIEGRALLTKLYATSTLSNTILQQLEVFVEKIGSSWPKDGGPLRILEVGAGTGGTTTKIVPVLARLGIPVEYTMTDVSSFFTATGRTKFKEYPFMKFKTVDIEKEPDAKLLKTQHIVLGSNVIHATRVLSVSLSNIHKMLRPDGLIIYHELTSQLLWADIIFGLVEGWWLFEDGRDHALQSPQHWEKILRSVGYGHVDWTDGTRPEAKIQNLIFAMASDPTYDREPLPTASIMTDVADQVATVNAYVCQYSSNFQFRRNSASRATGLSSGRCVLITGATGSLGAHLVAYCAERLDVSKVICFNRTSQTAGVARQAKAFKSKGISLEVNTNPKLEVIETDASKDQLGLSPSEYAALVDSVTDIVHNAWPMSINRGVRSYEGQFRVMRNLVDLARDATMQRPEPFKFGFQFISSIGVVGMYPLLTNNFLVPEHRMPVESVVPSGYGYAKLVCERMLDETLHLYPQAFHPSAVRINQIAGSTRSGYWNRNEHLVFLIKSSQTLNALPDLQGHLTWCPVDTVAATLGELLLDNANSVASAHPIYHIENPSRQSYSEMIRVLADSLFIDHANIIPFYDWVQRVRDFEGPVTENPAKQVVDFFDEHFLRMSCGDLVLDTVKSREISATLRARGVITSDLVNKYVEAWRRAGVLR</sequence>
<name>ASC5_DIDFA</name>
<dbReference type="EC" id="2.3.1.-" evidence="8"/>
<dbReference type="EMBL" id="MN052626">
    <property type="protein sequence ID" value="QEN17973.1"/>
    <property type="molecule type" value="Genomic_DNA"/>
</dbReference>
<dbReference type="SMR" id="A0A5C1RD96"/>
<dbReference type="GO" id="GO:0004315">
    <property type="term" value="F:3-oxoacyl-[acyl-carrier-protein] synthase activity"/>
    <property type="evidence" value="ECO:0007669"/>
    <property type="project" value="InterPro"/>
</dbReference>
<dbReference type="GO" id="GO:0008168">
    <property type="term" value="F:methyltransferase activity"/>
    <property type="evidence" value="ECO:0007669"/>
    <property type="project" value="UniProtKB-KW"/>
</dbReference>
<dbReference type="GO" id="GO:0006633">
    <property type="term" value="P:fatty acid biosynthetic process"/>
    <property type="evidence" value="ECO:0007669"/>
    <property type="project" value="InterPro"/>
</dbReference>
<dbReference type="GO" id="GO:0032259">
    <property type="term" value="P:methylation"/>
    <property type="evidence" value="ECO:0007669"/>
    <property type="project" value="UniProtKB-KW"/>
</dbReference>
<dbReference type="CDD" id="cd00833">
    <property type="entry name" value="PKS"/>
    <property type="match status" value="1"/>
</dbReference>
<dbReference type="Gene3D" id="3.30.70.3290">
    <property type="match status" value="1"/>
</dbReference>
<dbReference type="Gene3D" id="3.40.47.10">
    <property type="match status" value="1"/>
</dbReference>
<dbReference type="Gene3D" id="1.10.1200.10">
    <property type="entry name" value="ACP-like"/>
    <property type="match status" value="1"/>
</dbReference>
<dbReference type="Gene3D" id="3.40.366.10">
    <property type="entry name" value="Malonyl-Coenzyme A Acyl Carrier Protein, domain 2"/>
    <property type="match status" value="2"/>
</dbReference>
<dbReference type="Gene3D" id="3.40.50.720">
    <property type="entry name" value="NAD(P)-binding Rossmann-like Domain"/>
    <property type="match status" value="1"/>
</dbReference>
<dbReference type="Gene3D" id="3.10.129.110">
    <property type="entry name" value="Polyketide synthase dehydratase"/>
    <property type="match status" value="1"/>
</dbReference>
<dbReference type="Gene3D" id="3.40.50.150">
    <property type="entry name" value="Vaccinia Virus protein VP39"/>
    <property type="match status" value="1"/>
</dbReference>
<dbReference type="InterPro" id="IPR001227">
    <property type="entry name" value="Ac_transferase_dom_sf"/>
</dbReference>
<dbReference type="InterPro" id="IPR036736">
    <property type="entry name" value="ACP-like_sf"/>
</dbReference>
<dbReference type="InterPro" id="IPR014043">
    <property type="entry name" value="Acyl_transferase_dom"/>
</dbReference>
<dbReference type="InterPro" id="IPR016035">
    <property type="entry name" value="Acyl_Trfase/lysoPLipase"/>
</dbReference>
<dbReference type="InterPro" id="IPR013120">
    <property type="entry name" value="Far_NAD-bd"/>
</dbReference>
<dbReference type="InterPro" id="IPR018201">
    <property type="entry name" value="Ketoacyl_synth_AS"/>
</dbReference>
<dbReference type="InterPro" id="IPR014031">
    <property type="entry name" value="Ketoacyl_synth_C"/>
</dbReference>
<dbReference type="InterPro" id="IPR014030">
    <property type="entry name" value="Ketoacyl_synth_N"/>
</dbReference>
<dbReference type="InterPro" id="IPR016036">
    <property type="entry name" value="Malonyl_transacylase_ACP-bd"/>
</dbReference>
<dbReference type="InterPro" id="IPR013217">
    <property type="entry name" value="Methyltransf_12"/>
</dbReference>
<dbReference type="InterPro" id="IPR036291">
    <property type="entry name" value="NAD(P)-bd_dom_sf"/>
</dbReference>
<dbReference type="InterPro" id="IPR020841">
    <property type="entry name" value="PKS_Beta-ketoAc_synthase_dom"/>
</dbReference>
<dbReference type="InterPro" id="IPR042104">
    <property type="entry name" value="PKS_dehydratase_sf"/>
</dbReference>
<dbReference type="InterPro" id="IPR049900">
    <property type="entry name" value="PKS_mFAS_DH"/>
</dbReference>
<dbReference type="InterPro" id="IPR050444">
    <property type="entry name" value="Polyketide_Synthase"/>
</dbReference>
<dbReference type="InterPro" id="IPR009081">
    <property type="entry name" value="PP-bd_ACP"/>
</dbReference>
<dbReference type="InterPro" id="IPR006162">
    <property type="entry name" value="Ppantetheine_attach_site"/>
</dbReference>
<dbReference type="InterPro" id="IPR029063">
    <property type="entry name" value="SAM-dependent_MTases_sf"/>
</dbReference>
<dbReference type="InterPro" id="IPR032088">
    <property type="entry name" value="SAT"/>
</dbReference>
<dbReference type="InterPro" id="IPR016039">
    <property type="entry name" value="Thiolase-like"/>
</dbReference>
<dbReference type="PANTHER" id="PTHR45681:SF6">
    <property type="entry name" value="POLYKETIDE SYNTHASE 37"/>
    <property type="match status" value="1"/>
</dbReference>
<dbReference type="PANTHER" id="PTHR45681">
    <property type="entry name" value="POLYKETIDE SYNTHASE 44-RELATED"/>
    <property type="match status" value="1"/>
</dbReference>
<dbReference type="Pfam" id="PF00698">
    <property type="entry name" value="Acyl_transf_1"/>
    <property type="match status" value="1"/>
</dbReference>
<dbReference type="Pfam" id="PF18558">
    <property type="entry name" value="HTH_51"/>
    <property type="match status" value="1"/>
</dbReference>
<dbReference type="Pfam" id="PF00109">
    <property type="entry name" value="ketoacyl-synt"/>
    <property type="match status" value="1"/>
</dbReference>
<dbReference type="Pfam" id="PF02801">
    <property type="entry name" value="Ketoacyl-synt_C"/>
    <property type="match status" value="1"/>
</dbReference>
<dbReference type="Pfam" id="PF08242">
    <property type="entry name" value="Methyltransf_12"/>
    <property type="match status" value="1"/>
</dbReference>
<dbReference type="Pfam" id="PF07993">
    <property type="entry name" value="NAD_binding_4"/>
    <property type="match status" value="1"/>
</dbReference>
<dbReference type="Pfam" id="PF00550">
    <property type="entry name" value="PP-binding"/>
    <property type="match status" value="1"/>
</dbReference>
<dbReference type="Pfam" id="PF16073">
    <property type="entry name" value="SAT"/>
    <property type="match status" value="1"/>
</dbReference>
<dbReference type="SMART" id="SM00827">
    <property type="entry name" value="PKS_AT"/>
    <property type="match status" value="1"/>
</dbReference>
<dbReference type="SMART" id="SM00825">
    <property type="entry name" value="PKS_KS"/>
    <property type="match status" value="1"/>
</dbReference>
<dbReference type="SMART" id="SM01294">
    <property type="entry name" value="PKS_PP_betabranch"/>
    <property type="match status" value="1"/>
</dbReference>
<dbReference type="SUPFAM" id="SSF47336">
    <property type="entry name" value="ACP-like"/>
    <property type="match status" value="1"/>
</dbReference>
<dbReference type="SUPFAM" id="SSF52151">
    <property type="entry name" value="FabD/lysophospholipase-like"/>
    <property type="match status" value="1"/>
</dbReference>
<dbReference type="SUPFAM" id="SSF51735">
    <property type="entry name" value="NAD(P)-binding Rossmann-fold domains"/>
    <property type="match status" value="1"/>
</dbReference>
<dbReference type="SUPFAM" id="SSF55048">
    <property type="entry name" value="Probable ACP-binding domain of malonyl-CoA ACP transacylase"/>
    <property type="match status" value="1"/>
</dbReference>
<dbReference type="SUPFAM" id="SSF53335">
    <property type="entry name" value="S-adenosyl-L-methionine-dependent methyltransferases"/>
    <property type="match status" value="1"/>
</dbReference>
<dbReference type="SUPFAM" id="SSF53901">
    <property type="entry name" value="Thiolase-like"/>
    <property type="match status" value="1"/>
</dbReference>
<dbReference type="PROSITE" id="PS50075">
    <property type="entry name" value="CARRIER"/>
    <property type="match status" value="1"/>
</dbReference>
<dbReference type="PROSITE" id="PS00606">
    <property type="entry name" value="KS3_1"/>
    <property type="match status" value="1"/>
</dbReference>
<dbReference type="PROSITE" id="PS52004">
    <property type="entry name" value="KS3_2"/>
    <property type="match status" value="1"/>
</dbReference>
<dbReference type="PROSITE" id="PS00012">
    <property type="entry name" value="PHOSPHOPANTETHEINE"/>
    <property type="match status" value="1"/>
</dbReference>
<dbReference type="PROSITE" id="PS52019">
    <property type="entry name" value="PKS_MFAS_DH"/>
    <property type="match status" value="1"/>
</dbReference>
<accession>A0A5C1RD96</accession>
<comment type="function">
    <text evidence="8 10">Non-reducing polyketide synthase; part of the gene cluster that mediates the biosynthesis of the selective antifungal agent ascochitine, an o-quinone methide that plays a possible protective role against other microbial competitors in nature and is considered to be important for pathogenicity of legume-associated Didymella species (PubMed:31554725). The pathway probably begins with the synthesis of a keto-aldehyde intermediate by the ascochitine non-reducing polyketide synthase pksAC from successive condensations of 4 malonyl-CoA units, presumably with a simple acetyl-CoA starter unit (Probable). Release of the keto-aldehyde intermediate is consistent with the presence of the C-terminal reductive release domain (Probable). The HR-PKS (orf7) probably makes a diketide starter unit which is passed to the non-reducing polyketide synthase pksAC for further extension, producing ascochital and ascochitine (Probable). The aldehyde dehydrogenase (orf1), the 2-oxoglutarate-dependent dioxygenase (orf3) and the dehydrogenase (orf9) are probably involved in subsequent oxidations of methyl groups to the carboxylic acid of the heterocyclic ring (Probable). The ascochitine gene cluster also includes a gene encoding a short peptide (orf2) that is often found in secondary metabolite gene clusters and which function has still to be determined (Probable).</text>
</comment>
<comment type="pathway">
    <text evidence="8">Mycotoxin biosynthesis.</text>
</comment>
<comment type="domain">
    <text evidence="2 10">Multidomain protein; including an N-terminal starter unit:ACP transacylase (SAT) domain, a beta-ketoacyl synthase (KS) domain, a malonyl-CoA:ACP transacylase (MAT) domain, a product template domain, a acyl carrier protein (ACP) domain, a methyltransferase domain (CMeT) and a reductive NADPH-binding domain that is required for NADPH-dependent product release (Probable). The CMet adds methyl groups as check-point tags, which are recognized by KS, such that a lack of methylation causes release of immature products at the triketide stage (By similarity).</text>
</comment>
<comment type="disruption phenotype">
    <text evidence="8">Blocks the production of ascochitine and its derivatives.</text>
</comment>
<feature type="chain" id="PRO_0000448990" description="Non-reducing polyketide synthase AC">
    <location>
        <begin position="1"/>
        <end position="2645"/>
    </location>
</feature>
<feature type="domain" description="Ketosynthase family 3 (KS3)" evidence="5 10">
    <location>
        <begin position="416"/>
        <end position="834"/>
    </location>
</feature>
<feature type="domain" description="PKS/mFAS DH" evidence="6">
    <location>
        <begin position="1324"/>
        <end position="1637"/>
    </location>
</feature>
<feature type="domain" description="Carrier" evidence="4 10">
    <location>
        <begin position="1711"/>
        <end position="1788"/>
    </location>
</feature>
<feature type="region of interest" description="N-terminal acylcarrier protein transacylase domain (SAT)" evidence="3 10">
    <location>
        <begin position="73"/>
        <end position="2366"/>
    </location>
</feature>
<feature type="region of interest" description="Malonyl-CoA:ACP transacylase (MAT) domain" evidence="3 10">
    <location>
        <begin position="943"/>
        <end position="1252"/>
    </location>
</feature>
<feature type="region of interest" description="N-terminal hotdog fold" evidence="6">
    <location>
        <begin position="1324"/>
        <end position="1457"/>
    </location>
</feature>
<feature type="region of interest" description="Product template (PT) domain" evidence="3 10">
    <location>
        <begin position="1330"/>
        <end position="1641"/>
    </location>
</feature>
<feature type="region of interest" description="C-terminal hotdog fold" evidence="6">
    <location>
        <begin position="1487"/>
        <end position="1637"/>
    </location>
</feature>
<feature type="region of interest" description="Disordered" evidence="7">
    <location>
        <begin position="1684"/>
        <end position="1716"/>
    </location>
</feature>
<feature type="region of interest" description="Disordered" evidence="7">
    <location>
        <begin position="1794"/>
        <end position="1816"/>
    </location>
</feature>
<feature type="region of interest" description="Methyltransferase (CMeT) domain" evidence="3 10">
    <location>
        <begin position="2023"/>
        <end position="2197"/>
    </location>
</feature>
<feature type="region of interest" description="NADPH-binding (R) domain" evidence="3 10">
    <location>
        <begin position="2269"/>
        <end position="2573"/>
    </location>
</feature>
<feature type="compositionally biased region" description="Polar residues" evidence="7">
    <location>
        <begin position="1684"/>
        <end position="1696"/>
    </location>
</feature>
<feature type="compositionally biased region" description="Basic residues" evidence="7">
    <location>
        <begin position="1697"/>
        <end position="1706"/>
    </location>
</feature>
<feature type="compositionally biased region" description="Acidic residues" evidence="7">
    <location>
        <begin position="1794"/>
        <end position="1805"/>
    </location>
</feature>
<feature type="active site" description="Proton donor/acceptor; for transacylase activity" evidence="1">
    <location>
        <position position="260"/>
    </location>
</feature>
<feature type="active site" description="For beta-ketoacyl synthase activity" evidence="5">
    <location>
        <position position="583"/>
    </location>
</feature>
<feature type="active site" description="For beta-ketoacyl synthase activity" evidence="5">
    <location>
        <position position="718"/>
    </location>
</feature>
<feature type="active site" description="For beta-ketoacyl synthase activity" evidence="5">
    <location>
        <position position="757"/>
    </location>
</feature>
<feature type="active site" description="Proton acceptor; for dehydratase activity" evidence="6">
    <location>
        <position position="1359"/>
    </location>
</feature>
<feature type="active site" description="Proton donor; for dehydratase activity" evidence="6">
    <location>
        <position position="1542"/>
    </location>
</feature>
<feature type="active site" description="For methyltransferase activity" evidence="2">
    <location>
        <position position="2009"/>
    </location>
</feature>
<feature type="modified residue" description="O-(pantetheine 4'-phosphoryl)serine" evidence="4">
    <location>
        <position position="1748"/>
    </location>
</feature>
<evidence type="ECO:0000250" key="1">
    <source>
        <dbReference type="UniProtKB" id="A0A0K0MCJ4"/>
    </source>
</evidence>
<evidence type="ECO:0000250" key="2">
    <source>
        <dbReference type="UniProtKB" id="Q65Z23"/>
    </source>
</evidence>
<evidence type="ECO:0000255" key="3"/>
<evidence type="ECO:0000255" key="4">
    <source>
        <dbReference type="PROSITE-ProRule" id="PRU00258"/>
    </source>
</evidence>
<evidence type="ECO:0000255" key="5">
    <source>
        <dbReference type="PROSITE-ProRule" id="PRU01348"/>
    </source>
</evidence>
<evidence type="ECO:0000255" key="6">
    <source>
        <dbReference type="PROSITE-ProRule" id="PRU01363"/>
    </source>
</evidence>
<evidence type="ECO:0000256" key="7">
    <source>
        <dbReference type="SAM" id="MobiDB-lite"/>
    </source>
</evidence>
<evidence type="ECO:0000269" key="8">
    <source>
    </source>
</evidence>
<evidence type="ECO:0000303" key="9">
    <source>
    </source>
</evidence>
<evidence type="ECO:0000305" key="10">
    <source>
    </source>
</evidence>
<organism>
    <name type="scientific">Didymella fabae</name>
    <name type="common">Leaf and pod spot disease fungus</name>
    <name type="synonym">Ascochyta fabae</name>
    <dbReference type="NCBI Taxonomy" id="372025"/>
    <lineage>
        <taxon>Eukaryota</taxon>
        <taxon>Fungi</taxon>
        <taxon>Dikarya</taxon>
        <taxon>Ascomycota</taxon>
        <taxon>Pezizomycotina</taxon>
        <taxon>Dothideomycetes</taxon>
        <taxon>Pleosporomycetidae</taxon>
        <taxon>Pleosporales</taxon>
        <taxon>Pleosporineae</taxon>
        <taxon>Didymellaceae</taxon>
        <taxon>Ascochyta</taxon>
    </lineage>
</organism>